<accession>L0BWK3</accession>
<name>TCS4_CAMSI</name>
<evidence type="ECO:0000250" key="1">
    <source>
        <dbReference type="UniProtKB" id="A0A6C0WW36"/>
    </source>
</evidence>
<evidence type="ECO:0000250" key="2">
    <source>
        <dbReference type="UniProtKB" id="Q2HXI6"/>
    </source>
</evidence>
<evidence type="ECO:0000250" key="3">
    <source>
        <dbReference type="UniProtKB" id="Q9FLN8"/>
    </source>
</evidence>
<evidence type="ECO:0000250" key="4">
    <source>
        <dbReference type="UniProtKB" id="Q9FZN8"/>
    </source>
</evidence>
<evidence type="ECO:0000303" key="5">
    <source ref="1"/>
</evidence>
<evidence type="ECO:0000305" key="6"/>
<comment type="function">
    <text evidence="4">May be involved in the biosynthesis of caffeine.</text>
</comment>
<comment type="cofactor">
    <cofactor evidence="3">
        <name>Mg(2+)</name>
        <dbReference type="ChEBI" id="CHEBI:18420"/>
    </cofactor>
    <text evidence="3">Binds 1 Mg(2+) ion per subunit.</text>
</comment>
<comment type="pathway">
    <text evidence="4">Alkaloid biosynthesis.</text>
</comment>
<comment type="similarity">
    <text evidence="6">Belongs to the methyltransferase superfamily. Type-7 methyltransferase family.</text>
</comment>
<keyword id="KW-0460">Magnesium</keyword>
<keyword id="KW-0479">Metal-binding</keyword>
<keyword id="KW-0489">Methyltransferase</keyword>
<keyword id="KW-0808">Transferase</keyword>
<organism>
    <name type="scientific">Camellia sinensis</name>
    <name type="common">Tea plant</name>
    <name type="synonym">Thea sinensis</name>
    <dbReference type="NCBI Taxonomy" id="4442"/>
    <lineage>
        <taxon>Eukaryota</taxon>
        <taxon>Viridiplantae</taxon>
        <taxon>Streptophyta</taxon>
        <taxon>Embryophyta</taxon>
        <taxon>Tracheophyta</taxon>
        <taxon>Spermatophyta</taxon>
        <taxon>Magnoliopsida</taxon>
        <taxon>eudicotyledons</taxon>
        <taxon>Gunneridae</taxon>
        <taxon>Pentapetalae</taxon>
        <taxon>asterids</taxon>
        <taxon>Ericales</taxon>
        <taxon>Theaceae</taxon>
        <taxon>Camellia</taxon>
    </lineage>
</organism>
<sequence>MEVKEALFMNRGEGESSYAQNSSFTQKVASMTMPVLENAVETLFSKDFHLFQALNAADLGCATSPNTFTVISTIKRMMEKKCRELNCQTLELQVYLNDLPGNDFNTLFKGLLSKVVVGNKCEEVSCYVMGVPGSFHGRLFPRNSLHLVHSCYSAHWLSQAPKGLTSREGLPLNKGKIYISKRSPPVVREAYLSQFHDDFTMFLNARSQEVVPHGCMVLILPSRQSSDPSSMESCFTWELLAIAIAELVSQGLIDEDKLDTFNVPSYFPSLEEVKDIVERDGSFTIDHMEGFELDTLQMQENDKWIRGEKLAKAVRAFTEPIISNQFGHEIMDKLYDKFTHIVASDLEGKIPKSTSIVLVLSKIVG</sequence>
<dbReference type="EC" id="2.1.1.-" evidence="4"/>
<dbReference type="EMBL" id="JX647693">
    <property type="protein sequence ID" value="AFZ93516.1"/>
    <property type="molecule type" value="Genomic_DNA"/>
</dbReference>
<dbReference type="SMR" id="L0BWK3"/>
<dbReference type="GO" id="GO:0046872">
    <property type="term" value="F:metal ion binding"/>
    <property type="evidence" value="ECO:0007669"/>
    <property type="project" value="UniProtKB-KW"/>
</dbReference>
<dbReference type="GO" id="GO:0008168">
    <property type="term" value="F:methyltransferase activity"/>
    <property type="evidence" value="ECO:0007669"/>
    <property type="project" value="UniProtKB-KW"/>
</dbReference>
<dbReference type="GO" id="GO:0032259">
    <property type="term" value="P:methylation"/>
    <property type="evidence" value="ECO:0007669"/>
    <property type="project" value="UniProtKB-KW"/>
</dbReference>
<dbReference type="Gene3D" id="1.10.1200.270">
    <property type="entry name" value="Methyltransferase, alpha-helical capping domain"/>
    <property type="match status" value="1"/>
</dbReference>
<dbReference type="Gene3D" id="3.40.50.150">
    <property type="entry name" value="Vaccinia Virus protein VP39"/>
    <property type="match status" value="1"/>
</dbReference>
<dbReference type="InterPro" id="IPR005299">
    <property type="entry name" value="MeTrfase_7"/>
</dbReference>
<dbReference type="InterPro" id="IPR042086">
    <property type="entry name" value="MeTrfase_capping"/>
</dbReference>
<dbReference type="InterPro" id="IPR029063">
    <property type="entry name" value="SAM-dependent_MTases_sf"/>
</dbReference>
<dbReference type="PANTHER" id="PTHR31009">
    <property type="entry name" value="S-ADENOSYL-L-METHIONINE:CARBOXYL METHYLTRANSFERASE FAMILY PROTEIN"/>
    <property type="match status" value="1"/>
</dbReference>
<dbReference type="Pfam" id="PF03492">
    <property type="entry name" value="Methyltransf_7"/>
    <property type="match status" value="1"/>
</dbReference>
<dbReference type="SUPFAM" id="SSF53335">
    <property type="entry name" value="S-adenosyl-L-methionine-dependent methyltransferases"/>
    <property type="match status" value="1"/>
</dbReference>
<feature type="chain" id="PRO_0000451797" description="Probable caffeine synthase 4">
    <location>
        <begin position="1"/>
        <end position="365"/>
    </location>
</feature>
<feature type="binding site" evidence="1">
    <location>
        <position position="18"/>
    </location>
    <ligand>
        <name>S-adenosyl-L-homocysteine</name>
        <dbReference type="ChEBI" id="CHEBI:57856"/>
    </ligand>
</feature>
<feature type="binding site" evidence="1">
    <location>
        <position position="25"/>
    </location>
    <ligand>
        <name>caffeine</name>
        <dbReference type="ChEBI" id="CHEBI:27732"/>
    </ligand>
</feature>
<feature type="binding site" evidence="1">
    <location>
        <position position="61"/>
    </location>
    <ligand>
        <name>S-adenosyl-L-homocysteine</name>
        <dbReference type="ChEBI" id="CHEBI:57856"/>
    </ligand>
</feature>
<feature type="binding site" evidence="1">
    <location>
        <position position="66"/>
    </location>
    <ligand>
        <name>S-adenosyl-L-homocysteine</name>
        <dbReference type="ChEBI" id="CHEBI:57856"/>
    </ligand>
</feature>
<feature type="binding site" evidence="1">
    <location>
        <position position="98"/>
    </location>
    <ligand>
        <name>S-adenosyl-L-homocysteine</name>
        <dbReference type="ChEBI" id="CHEBI:57856"/>
    </ligand>
</feature>
<feature type="binding site" evidence="1">
    <location>
        <position position="99"/>
    </location>
    <ligand>
        <name>S-adenosyl-L-homocysteine</name>
        <dbReference type="ChEBI" id="CHEBI:57856"/>
    </ligand>
</feature>
<feature type="binding site" evidence="1">
    <location>
        <position position="134"/>
    </location>
    <ligand>
        <name>S-adenosyl-L-homocysteine</name>
        <dbReference type="ChEBI" id="CHEBI:57856"/>
    </ligand>
</feature>
<feature type="binding site" evidence="1">
    <location>
        <position position="135"/>
    </location>
    <ligand>
        <name>S-adenosyl-L-homocysteine</name>
        <dbReference type="ChEBI" id="CHEBI:57856"/>
    </ligand>
</feature>
<feature type="binding site" evidence="1">
    <location>
        <position position="152"/>
    </location>
    <ligand>
        <name>caffeine</name>
        <dbReference type="ChEBI" id="CHEBI:27732"/>
    </ligand>
</feature>
<feature type="binding site" evidence="1">
    <location>
        <position position="155"/>
    </location>
    <ligand>
        <name>caffeine</name>
        <dbReference type="ChEBI" id="CHEBI:27732"/>
    </ligand>
</feature>
<feature type="binding site" evidence="1">
    <location>
        <position position="156"/>
    </location>
    <ligand>
        <name>caffeine</name>
        <dbReference type="ChEBI" id="CHEBI:27732"/>
    </ligand>
</feature>
<feature type="binding site" evidence="3">
    <location>
        <position position="173"/>
    </location>
    <ligand>
        <name>Mg(2+)</name>
        <dbReference type="ChEBI" id="CHEBI:18420"/>
    </ligand>
</feature>
<feature type="binding site" evidence="3">
    <location>
        <position position="259"/>
    </location>
    <ligand>
        <name>Mg(2+)</name>
        <dbReference type="ChEBI" id="CHEBI:18420"/>
    </ligand>
</feature>
<feature type="binding site" evidence="3">
    <location>
        <position position="261"/>
    </location>
    <ligand>
        <name>Mg(2+)</name>
        <dbReference type="ChEBI" id="CHEBI:18420"/>
    </ligand>
</feature>
<feature type="binding site" evidence="3">
    <location>
        <position position="262"/>
    </location>
    <ligand>
        <name>Mg(2+)</name>
        <dbReference type="ChEBI" id="CHEBI:18420"/>
    </ligand>
</feature>
<feature type="binding site" evidence="1">
    <location>
        <position position="317"/>
    </location>
    <ligand>
        <name>caffeine</name>
        <dbReference type="ChEBI" id="CHEBI:27732"/>
    </ligand>
</feature>
<feature type="site" description="Involved in substrate discrimination" evidence="4">
    <location>
        <position position="149"/>
    </location>
</feature>
<feature type="site" description="Involved in substrate discrimination" evidence="2">
    <location>
        <position position="221"/>
    </location>
</feature>
<feature type="site" description="Involved in substrate discrimination" evidence="4">
    <location>
        <position position="265"/>
    </location>
</feature>
<feature type="site" description="Involved in substrate discrimination" evidence="4">
    <location>
        <position position="313"/>
    </location>
</feature>
<feature type="site" description="Involved in substrate discrimination" evidence="4">
    <location>
        <position position="328"/>
    </location>
</feature>
<protein>
    <recommendedName>
        <fullName evidence="5">Probable caffeine synthase 4</fullName>
        <ecNumber evidence="4">2.1.1.-</ecNumber>
    </recommendedName>
</protein>
<reference key="1">
    <citation type="submission" date="2012-09" db="EMBL/GenBank/DDBJ databases">
        <title>Cloning and analysis of the N-methyltransferase gene family involving in caffeine biosynthesis of tea plant.</title>
        <authorList>
            <person name="Jin J.Q."/>
            <person name="Chen L."/>
        </authorList>
    </citation>
    <scope>NUCLEOTIDE SEQUENCE [GENOMIC DNA]</scope>
    <source>
        <strain>cv. Baiye 1</strain>
    </source>
</reference>
<gene>
    <name evidence="5" type="primary">TCS4</name>
</gene>
<proteinExistence type="inferred from homology"/>